<reference key="1">
    <citation type="journal article" date="2006" name="Proc. Natl. Acad. Sci. U.S.A.">
        <title>Multireplicon genome architecture of Lactobacillus salivarius.</title>
        <authorList>
            <person name="Claesson M.J."/>
            <person name="Li Y."/>
            <person name="Leahy S."/>
            <person name="Canchaya C."/>
            <person name="van Pijkeren J.P."/>
            <person name="Cerdeno-Tarraga A.M."/>
            <person name="Parkhill J."/>
            <person name="Flynn S."/>
            <person name="O'Sullivan G.C."/>
            <person name="Collins J.K."/>
            <person name="Higgins D."/>
            <person name="Shanahan F."/>
            <person name="Fitzgerald G.F."/>
            <person name="van Sinderen D."/>
            <person name="O'Toole P.W."/>
        </authorList>
    </citation>
    <scope>NUCLEOTIDE SEQUENCE [LARGE SCALE GENOMIC DNA]</scope>
    <source>
        <strain>UCC118</strain>
    </source>
</reference>
<accession>Q1WT34</accession>
<gene>
    <name type="ordered locus">LSL_1109</name>
</gene>
<name>YQGF_LIGS1</name>
<comment type="function">
    <text evidence="1">Could be a nuclease involved in processing of the 5'-end of pre-16S rRNA.</text>
</comment>
<comment type="subcellular location">
    <subcellularLocation>
        <location evidence="1">Cytoplasm</location>
    </subcellularLocation>
</comment>
<comment type="similarity">
    <text evidence="1">Belongs to the YqgF nuclease family.</text>
</comment>
<comment type="sequence caution" evidence="2">
    <conflict type="erroneous initiation">
        <sequence resource="EMBL-CDS" id="ABD99917"/>
    </conflict>
    <text>Truncated N-terminus.</text>
</comment>
<organism>
    <name type="scientific">Ligilactobacillus salivarius (strain UCC118)</name>
    <name type="common">Lactobacillus salivarius</name>
    <dbReference type="NCBI Taxonomy" id="362948"/>
    <lineage>
        <taxon>Bacteria</taxon>
        <taxon>Bacillati</taxon>
        <taxon>Bacillota</taxon>
        <taxon>Bacilli</taxon>
        <taxon>Lactobacillales</taxon>
        <taxon>Lactobacillaceae</taxon>
        <taxon>Ligilactobacillus</taxon>
    </lineage>
</organism>
<feature type="chain" id="PRO_0000257544" description="Putative pre-16S rRNA nuclease">
    <location>
        <begin position="1"/>
        <end position="147"/>
    </location>
</feature>
<sequence length="147" mass="16318">MGRLMGLDVGSRTVGVAVSDMLGWTAQGVEIVQINEDEQEFGLDRIAELVKENEVVGFVLGLPKNMNNTSGPRVEAAKAYGELLEEKFNLPIDFIDERLTTVEAERMLVEQADASRKKRKKVIDKLAASLILQNYLDAKGKLLKELN</sequence>
<protein>
    <recommendedName>
        <fullName evidence="1">Putative pre-16S rRNA nuclease</fullName>
        <ecNumber evidence="1">3.1.-.-</ecNumber>
    </recommendedName>
</protein>
<evidence type="ECO:0000255" key="1">
    <source>
        <dbReference type="HAMAP-Rule" id="MF_00651"/>
    </source>
</evidence>
<evidence type="ECO:0000305" key="2"/>
<dbReference type="EC" id="3.1.-.-" evidence="1"/>
<dbReference type="EMBL" id="CP000233">
    <property type="protein sequence ID" value="ABD99917.1"/>
    <property type="status" value="ALT_INIT"/>
    <property type="molecule type" value="Genomic_DNA"/>
</dbReference>
<dbReference type="RefSeq" id="WP_047035765.1">
    <property type="nucleotide sequence ID" value="NC_007929.1"/>
</dbReference>
<dbReference type="RefSeq" id="YP_536000.1">
    <property type="nucleotide sequence ID" value="NC_007929.1"/>
</dbReference>
<dbReference type="SMR" id="Q1WT34"/>
<dbReference type="STRING" id="362948.LSL_1109"/>
<dbReference type="KEGG" id="lsl:LSL_1109"/>
<dbReference type="PATRIC" id="fig|362948.14.peg.1181"/>
<dbReference type="HOGENOM" id="CLU_098240_2_0_9"/>
<dbReference type="OrthoDB" id="9796140at2"/>
<dbReference type="Proteomes" id="UP000006559">
    <property type="component" value="Chromosome"/>
</dbReference>
<dbReference type="GO" id="GO:0005829">
    <property type="term" value="C:cytosol"/>
    <property type="evidence" value="ECO:0007669"/>
    <property type="project" value="TreeGrafter"/>
</dbReference>
<dbReference type="GO" id="GO:0004518">
    <property type="term" value="F:nuclease activity"/>
    <property type="evidence" value="ECO:0007669"/>
    <property type="project" value="UniProtKB-KW"/>
</dbReference>
<dbReference type="GO" id="GO:0000967">
    <property type="term" value="P:rRNA 5'-end processing"/>
    <property type="evidence" value="ECO:0007669"/>
    <property type="project" value="UniProtKB-UniRule"/>
</dbReference>
<dbReference type="CDD" id="cd16964">
    <property type="entry name" value="YqgF"/>
    <property type="match status" value="1"/>
</dbReference>
<dbReference type="Gene3D" id="3.30.420.140">
    <property type="entry name" value="YqgF/RNase H-like domain"/>
    <property type="match status" value="1"/>
</dbReference>
<dbReference type="HAMAP" id="MF_00651">
    <property type="entry name" value="Nuclease_YqgF"/>
    <property type="match status" value="1"/>
</dbReference>
<dbReference type="InterPro" id="IPR012337">
    <property type="entry name" value="RNaseH-like_sf"/>
</dbReference>
<dbReference type="InterPro" id="IPR005227">
    <property type="entry name" value="YqgF"/>
</dbReference>
<dbReference type="InterPro" id="IPR006641">
    <property type="entry name" value="YqgF/RNaseH-like_dom"/>
</dbReference>
<dbReference type="InterPro" id="IPR037027">
    <property type="entry name" value="YqgF/RNaseH-like_dom_sf"/>
</dbReference>
<dbReference type="NCBIfam" id="TIGR00250">
    <property type="entry name" value="RNAse_H_YqgF"/>
    <property type="match status" value="1"/>
</dbReference>
<dbReference type="PANTHER" id="PTHR33317">
    <property type="entry name" value="POLYNUCLEOTIDYL TRANSFERASE, RIBONUCLEASE H-LIKE SUPERFAMILY PROTEIN"/>
    <property type="match status" value="1"/>
</dbReference>
<dbReference type="PANTHER" id="PTHR33317:SF4">
    <property type="entry name" value="POLYNUCLEOTIDYL TRANSFERASE, RIBONUCLEASE H-LIKE SUPERFAMILY PROTEIN"/>
    <property type="match status" value="1"/>
</dbReference>
<dbReference type="Pfam" id="PF03652">
    <property type="entry name" value="RuvX"/>
    <property type="match status" value="1"/>
</dbReference>
<dbReference type="SMART" id="SM00732">
    <property type="entry name" value="YqgFc"/>
    <property type="match status" value="1"/>
</dbReference>
<dbReference type="SUPFAM" id="SSF53098">
    <property type="entry name" value="Ribonuclease H-like"/>
    <property type="match status" value="1"/>
</dbReference>
<proteinExistence type="inferred from homology"/>
<keyword id="KW-0963">Cytoplasm</keyword>
<keyword id="KW-0378">Hydrolase</keyword>
<keyword id="KW-0540">Nuclease</keyword>
<keyword id="KW-1185">Reference proteome</keyword>
<keyword id="KW-0690">Ribosome biogenesis</keyword>